<organism>
    <name type="scientific">Rattus norvegicus</name>
    <name type="common">Rat</name>
    <dbReference type="NCBI Taxonomy" id="10116"/>
    <lineage>
        <taxon>Eukaryota</taxon>
        <taxon>Metazoa</taxon>
        <taxon>Chordata</taxon>
        <taxon>Craniata</taxon>
        <taxon>Vertebrata</taxon>
        <taxon>Euteleostomi</taxon>
        <taxon>Mammalia</taxon>
        <taxon>Eutheria</taxon>
        <taxon>Euarchontoglires</taxon>
        <taxon>Glires</taxon>
        <taxon>Rodentia</taxon>
        <taxon>Myomorpha</taxon>
        <taxon>Muroidea</taxon>
        <taxon>Muridae</taxon>
        <taxon>Murinae</taxon>
        <taxon>Rattus</taxon>
    </lineage>
</organism>
<name>HERC4_RAT</name>
<keyword id="KW-0963">Cytoplasm</keyword>
<keyword id="KW-0221">Differentiation</keyword>
<keyword id="KW-1185">Reference proteome</keyword>
<keyword id="KW-0677">Repeat</keyword>
<keyword id="KW-0744">Spermatogenesis</keyword>
<keyword id="KW-0808">Transferase</keyword>
<keyword id="KW-0833">Ubl conjugation pathway</keyword>
<reference key="1">
    <citation type="journal article" date="2004" name="Genome Res.">
        <title>The status, quality, and expansion of the NIH full-length cDNA project: the Mammalian Gene Collection (MGC).</title>
        <authorList>
            <consortium name="The MGC Project Team"/>
        </authorList>
    </citation>
    <scope>NUCLEOTIDE SEQUENCE [LARGE SCALE MRNA]</scope>
    <source>
        <tissue>Heart</tissue>
    </source>
</reference>
<dbReference type="EC" id="2.3.2.26"/>
<dbReference type="EMBL" id="BC087104">
    <property type="protein sequence ID" value="AAH87104.1"/>
    <property type="molecule type" value="mRNA"/>
</dbReference>
<dbReference type="RefSeq" id="NP_001012074.1">
    <property type="nucleotide sequence ID" value="NM_001012074.1"/>
</dbReference>
<dbReference type="RefSeq" id="XP_006256196.1">
    <property type="nucleotide sequence ID" value="XM_006256134.5"/>
</dbReference>
<dbReference type="RefSeq" id="XP_017457145.1">
    <property type="nucleotide sequence ID" value="XM_017601656.3"/>
</dbReference>
<dbReference type="SMR" id="Q5PQN1"/>
<dbReference type="FunCoup" id="Q5PQN1">
    <property type="interactions" value="4063"/>
</dbReference>
<dbReference type="IntAct" id="Q5PQN1">
    <property type="interactions" value="1"/>
</dbReference>
<dbReference type="STRING" id="10116.ENSRNOP00000072219"/>
<dbReference type="iPTMnet" id="Q5PQN1"/>
<dbReference type="PhosphoSitePlus" id="Q5PQN1"/>
<dbReference type="jPOST" id="Q5PQN1"/>
<dbReference type="PaxDb" id="10116-ENSRNOP00000049495"/>
<dbReference type="Ensembl" id="ENSRNOT00000083017.2">
    <property type="protein sequence ID" value="ENSRNOP00000072219.1"/>
    <property type="gene ID" value="ENSRNOG00000061040.2"/>
</dbReference>
<dbReference type="GeneID" id="309758"/>
<dbReference type="KEGG" id="rno:309758"/>
<dbReference type="UCSC" id="RGD:1310971">
    <property type="organism name" value="rat"/>
</dbReference>
<dbReference type="AGR" id="RGD:1310971"/>
<dbReference type="CTD" id="26091"/>
<dbReference type="RGD" id="1310971">
    <property type="gene designation" value="Herc4"/>
</dbReference>
<dbReference type="eggNOG" id="KOG0941">
    <property type="taxonomic scope" value="Eukaryota"/>
</dbReference>
<dbReference type="GeneTree" id="ENSGT00940000158924"/>
<dbReference type="HOGENOM" id="CLU_002173_5_3_1"/>
<dbReference type="InParanoid" id="Q5PQN1"/>
<dbReference type="OMA" id="FKSQACW"/>
<dbReference type="OrthoDB" id="8068875at2759"/>
<dbReference type="PhylomeDB" id="Q5PQN1"/>
<dbReference type="TreeFam" id="TF315189"/>
<dbReference type="Reactome" id="R-RNO-983168">
    <property type="pathway name" value="Antigen processing: Ubiquitination &amp; Proteasome degradation"/>
</dbReference>
<dbReference type="UniPathway" id="UPA00143"/>
<dbReference type="PRO" id="PR:Q5PQN1"/>
<dbReference type="Proteomes" id="UP000002494">
    <property type="component" value="Chromosome 20"/>
</dbReference>
<dbReference type="Bgee" id="ENSRNOG00000061040">
    <property type="expression patterns" value="Expressed in duodenum and 20 other cell types or tissues"/>
</dbReference>
<dbReference type="GO" id="GO:0005737">
    <property type="term" value="C:cytoplasm"/>
    <property type="evidence" value="ECO:0000318"/>
    <property type="project" value="GO_Central"/>
</dbReference>
<dbReference type="GO" id="GO:0005829">
    <property type="term" value="C:cytosol"/>
    <property type="evidence" value="ECO:0007669"/>
    <property type="project" value="UniProtKB-SubCell"/>
</dbReference>
<dbReference type="GO" id="GO:0001650">
    <property type="term" value="C:fibrillar center"/>
    <property type="evidence" value="ECO:0007669"/>
    <property type="project" value="Ensembl"/>
</dbReference>
<dbReference type="GO" id="GO:0061630">
    <property type="term" value="F:ubiquitin protein ligase activity"/>
    <property type="evidence" value="ECO:0000318"/>
    <property type="project" value="GO_Central"/>
</dbReference>
<dbReference type="GO" id="GO:0030154">
    <property type="term" value="P:cell differentiation"/>
    <property type="evidence" value="ECO:0007669"/>
    <property type="project" value="UniProtKB-KW"/>
</dbReference>
<dbReference type="GO" id="GO:0045879">
    <property type="term" value="P:negative regulation of smoothened signaling pathway"/>
    <property type="evidence" value="ECO:0000266"/>
    <property type="project" value="RGD"/>
</dbReference>
<dbReference type="GO" id="GO:0016567">
    <property type="term" value="P:protein ubiquitination"/>
    <property type="evidence" value="ECO:0000318"/>
    <property type="project" value="GO_Central"/>
</dbReference>
<dbReference type="GO" id="GO:0007283">
    <property type="term" value="P:spermatogenesis"/>
    <property type="evidence" value="ECO:0000250"/>
    <property type="project" value="UniProtKB"/>
</dbReference>
<dbReference type="GO" id="GO:0006511">
    <property type="term" value="P:ubiquitin-dependent protein catabolic process"/>
    <property type="evidence" value="ECO:0000318"/>
    <property type="project" value="GO_Central"/>
</dbReference>
<dbReference type="CDD" id="cd00078">
    <property type="entry name" value="HECTc"/>
    <property type="match status" value="1"/>
</dbReference>
<dbReference type="FunFam" id="2.130.10.30:FF:000012">
    <property type="entry name" value="probable E3 ubiquitin-protein ligase HERC3 isoform X1"/>
    <property type="match status" value="1"/>
</dbReference>
<dbReference type="FunFam" id="2.130.10.30:FF:000014">
    <property type="entry name" value="probable E3 ubiquitin-protein ligase HERC4 isoform X1"/>
    <property type="match status" value="1"/>
</dbReference>
<dbReference type="FunFam" id="3.30.2160.10:FF:000004">
    <property type="entry name" value="probable E3 ubiquitin-protein ligase HERC4 isoform X1"/>
    <property type="match status" value="1"/>
</dbReference>
<dbReference type="FunFam" id="3.30.2410.10:FF:000003">
    <property type="entry name" value="probable E3 ubiquitin-protein ligase HERC4 isoform X1"/>
    <property type="match status" value="1"/>
</dbReference>
<dbReference type="FunFam" id="3.90.1750.10:FF:000010">
    <property type="entry name" value="probable E3 ubiquitin-protein ligase HERC4 isoform X1"/>
    <property type="match status" value="1"/>
</dbReference>
<dbReference type="Gene3D" id="3.30.2160.10">
    <property type="entry name" value="Hect, E3 ligase catalytic domain"/>
    <property type="match status" value="1"/>
</dbReference>
<dbReference type="Gene3D" id="3.30.2410.10">
    <property type="entry name" value="Hect, E3 ligase catalytic domain"/>
    <property type="match status" value="1"/>
</dbReference>
<dbReference type="Gene3D" id="3.90.1750.10">
    <property type="entry name" value="Hect, E3 ligase catalytic domains"/>
    <property type="match status" value="1"/>
</dbReference>
<dbReference type="Gene3D" id="2.130.10.30">
    <property type="entry name" value="Regulator of chromosome condensation 1/beta-lactamase-inhibitor protein II"/>
    <property type="match status" value="2"/>
</dbReference>
<dbReference type="InterPro" id="IPR000569">
    <property type="entry name" value="HECT_dom"/>
</dbReference>
<dbReference type="InterPro" id="IPR035983">
    <property type="entry name" value="Hect_E3_ubiquitin_ligase"/>
</dbReference>
<dbReference type="InterPro" id="IPR009091">
    <property type="entry name" value="RCC1/BLIP-II"/>
</dbReference>
<dbReference type="InterPro" id="IPR000408">
    <property type="entry name" value="Reg_chr_condens"/>
</dbReference>
<dbReference type="InterPro" id="IPR051709">
    <property type="entry name" value="Ub-ligase/GTPase-reg"/>
</dbReference>
<dbReference type="PANTHER" id="PTHR45622:SF58">
    <property type="entry name" value="REGULATOR OF CHROMOSOME CONDENSATION DOMAIN-CONTAINING PROTEIN"/>
    <property type="match status" value="1"/>
</dbReference>
<dbReference type="PANTHER" id="PTHR45622">
    <property type="entry name" value="UBIQUITIN-PROTEIN LIGASE E3A-RELATED"/>
    <property type="match status" value="1"/>
</dbReference>
<dbReference type="Pfam" id="PF00632">
    <property type="entry name" value="HECT"/>
    <property type="match status" value="1"/>
</dbReference>
<dbReference type="Pfam" id="PF25390">
    <property type="entry name" value="WD40_RLD"/>
    <property type="match status" value="1"/>
</dbReference>
<dbReference type="PRINTS" id="PR00633">
    <property type="entry name" value="RCCNDNSATION"/>
</dbReference>
<dbReference type="SMART" id="SM00119">
    <property type="entry name" value="HECTc"/>
    <property type="match status" value="1"/>
</dbReference>
<dbReference type="SUPFAM" id="SSF56204">
    <property type="entry name" value="Hect, E3 ligase catalytic domain"/>
    <property type="match status" value="1"/>
</dbReference>
<dbReference type="SUPFAM" id="SSF50985">
    <property type="entry name" value="RCC1/BLIP-II"/>
    <property type="match status" value="1"/>
</dbReference>
<dbReference type="PROSITE" id="PS50237">
    <property type="entry name" value="HECT"/>
    <property type="match status" value="1"/>
</dbReference>
<dbReference type="PROSITE" id="PS00626">
    <property type="entry name" value="RCC1_2"/>
    <property type="match status" value="3"/>
</dbReference>
<dbReference type="PROSITE" id="PS50012">
    <property type="entry name" value="RCC1_3"/>
    <property type="match status" value="7"/>
</dbReference>
<gene>
    <name type="primary">Herc4</name>
</gene>
<feature type="chain" id="PRO_0000278218" description="Probable E3 ubiquitin-protein ligase HERC4">
    <location>
        <begin position="1"/>
        <end position="1057"/>
    </location>
</feature>
<feature type="repeat" description="RCC1 1">
    <location>
        <begin position="1"/>
        <end position="51"/>
    </location>
</feature>
<feature type="repeat" description="RCC1 2">
    <location>
        <begin position="52"/>
        <end position="101"/>
    </location>
</feature>
<feature type="repeat" description="RCC1 3">
    <location>
        <begin position="102"/>
        <end position="154"/>
    </location>
</feature>
<feature type="repeat" description="RCC1 4">
    <location>
        <begin position="156"/>
        <end position="207"/>
    </location>
</feature>
<feature type="repeat" description="RCC1 5">
    <location>
        <begin position="208"/>
        <end position="259"/>
    </location>
</feature>
<feature type="repeat" description="RCC1 6">
    <location>
        <begin position="261"/>
        <end position="311"/>
    </location>
</feature>
<feature type="repeat" description="RCC1 7">
    <location>
        <begin position="313"/>
        <end position="366"/>
    </location>
</feature>
<feature type="domain" description="HECT" evidence="3">
    <location>
        <begin position="730"/>
        <end position="1057"/>
    </location>
</feature>
<feature type="active site" description="Glycyl thioester intermediate" evidence="3">
    <location>
        <position position="1025"/>
    </location>
</feature>
<sequence length="1057" mass="118540">MLCWGNASYGQLGLGGIDEEIVLEPRKSDFFVNKKVRDVGCGLRHTVFVLDDGTVYTCGCNDLGQLGHEKSRKKPEQVVALDAQNIVAVSCGEAHTLALNDKGQVYAWGLDSDGQLGLQGSEECIRVPRNIKSLSDIQIVQVACGYYHSLALSKASEVFCWGQNKYGQLGLGIECQKQTSPQLIKSLLGIPFMQVAAGGAHSFVLTLSGAIFGWGRNKFGQLGLNDENDRYVPNLLKSLRSQKIVYICCGEDHTAALTKEGGVFTFGAGGYGQLGHNSTSHEINPRKVFELMGSIVTQIACGRQHTSAFVPSSGRIYSFGLGGNGQLGTGSTSNRKSPFTVKGNWFSYNGQCPQDIGSEDYFCVKRIFSGGDQSFSHYSSPQSCGPPDDFRRSDPSKQIWTVNEALIQKWLSYPSGRFPVEIANEIDGTFSSSGCLNGSFLAVSNDDHYRTGTRFSGVDMNAARLLFHRLIQPDHPQISQQVAASLEKNLIPKLTSSLPDVEALRFYLTLPECPLMSDCNNFTTIAIPFGTALVNLEKAPLKVLENWWSVLEPPLFLKIVELFKEVVVHLLKLYKIGIPPSERRIFNSFLHTALKVLEILHRVNERTGQLIQYDKFYIHEVQELIDIRNDYINWVQQQAYGVDVSHGITELADIPVTICTYPFVFDAQAKTTLLQTDAVLQMQMAIDQAHRQNVSSLFLPVIESVNPCLILVVRRENIVGDAMEVLRKTKNIDYKKPLKVIFVGEDAVDAGGVRKEFFLLIMRELLDPKYGMFRYYEDSRLIWFSDKTFEDSDLFHLIGVICGLAIYNFTIVDLHFPLALYKKLLKRKPSLDDLKELMPDVGRSMQQLLDYPEDDIEETFCLNFTITVENFGATEVKELVLNGADTAVNKQNRQEFVDAYVDYIFNKSVASLFDAFHAGFHKVCGGKVLLLFQPNELQAMVIGNTNYDWKELEKNTEYKGEYWAEHPTIKIFWEVFHELPLEKKKQFLLFLTGSDRIPILGMKSLKLVIQSTGGGESYLPVSHTCFNLLDLPKYTEKETLRCKLIQAIDHNEGFSLI</sequence>
<evidence type="ECO:0000250" key="1">
    <source>
        <dbReference type="UniProtKB" id="Q5GLZ8"/>
    </source>
</evidence>
<evidence type="ECO:0000250" key="2">
    <source>
        <dbReference type="UniProtKB" id="Q6PAV2"/>
    </source>
</evidence>
<evidence type="ECO:0000255" key="3">
    <source>
        <dbReference type="PROSITE-ProRule" id="PRU00104"/>
    </source>
</evidence>
<protein>
    <recommendedName>
        <fullName>Probable E3 ubiquitin-protein ligase HERC4</fullName>
        <ecNumber>2.3.2.26</ecNumber>
    </recommendedName>
    <alternativeName>
        <fullName>HECT domain and RCC1-like domain-containing protein 4</fullName>
    </alternativeName>
    <alternativeName>
        <fullName>HECT-type E3 ubiquitin transferase HERC4</fullName>
    </alternativeName>
</protein>
<accession>Q5PQN1</accession>
<proteinExistence type="evidence at transcript level"/>
<comment type="function">
    <text evidence="2">Probable E3 ubiquitin-protein ligase involved in either protein trafficking or in the distribution of cellular structures. Required for spermatozoon maturation and fertility, and for the removal of the cytoplasmic droplet of the spermatozoon. E3 ubiquitin-protein ligases accept ubiquitin from an E2 ubiquitin-conjugating enzyme in the form of a thioester and then directly transfer it to targeted substrates.</text>
</comment>
<comment type="catalytic activity">
    <reaction>
        <text>S-ubiquitinyl-[E2 ubiquitin-conjugating enzyme]-L-cysteine + [acceptor protein]-L-lysine = [E2 ubiquitin-conjugating enzyme]-L-cysteine + N(6)-ubiquitinyl-[acceptor protein]-L-lysine.</text>
        <dbReference type="EC" id="2.3.2.26"/>
    </reaction>
</comment>
<comment type="pathway">
    <text>Protein modification; protein ubiquitination.</text>
</comment>
<comment type="subcellular location">
    <subcellularLocation>
        <location evidence="1">Cytoplasm</location>
        <location evidence="1">Cytosol</location>
    </subcellularLocation>
</comment>